<accession>Q6CXS0</accession>
<sequence length="657" mass="77003">MVYEMLSPVPVKKRHRPTLVCLNCRRRKTKCDRGKPSCSNCLKLGETCVYSEDTDENASKKVRYEYMDDLGLPEFINMAPKGLHLLSKRSASWFNGLFSDIAICDRDPYLRITNAVIDILRKSASKGIDRSERDTVLQLPNSLKTVTMYNRSEKSEDQLYHQIAREFSALRSAPIPETYVPYEYEFWSKYYPYFVDKIHPLVPVFNLIELKDLLEKFFQRQKDHPGKLNDKVHESTLLMLTYLIINFFLLEFDSHNRLIQDHINIIKKWLVQSKWFQKTTLLQLRVWLVLRFHNWCTYHDNDGNRMNANDGLMGLIMGHCASLGITWQLWTNVDSDECKNIWINALHWDRKLAVLNGNDTFNGRTMRVPELPNDHLVLKFLKCCVDDPTHVNYKLAIEILNKLNFEEQNPMVTWEWKVIVAVTKLQINHGRLNHINEGISAVIASLEDLITLWNEHFIRPLAPVSYSSRIIEISMNKALVLLPAIILRARNPCKQKILQLMDKILTTYFNEFPYYYHVFKRLFKYKLTLNLINREDSLDHMLTILKHENHQVLEKLGITSKDAEMSDDDVIKVWNARFSFTEKVVNLKVEMMCKNYEPNLFSSSYQHALEKLEERHSAKADAIDVTQFLQQVFDSTDFDLFYGMDVGELPKMDSILP</sequence>
<gene>
    <name type="primary">OAF3</name>
    <name type="ordered locus">KLLA0A06039g</name>
</gene>
<reference key="1">
    <citation type="journal article" date="2004" name="Nature">
        <title>Genome evolution in yeasts.</title>
        <authorList>
            <person name="Dujon B."/>
            <person name="Sherman D."/>
            <person name="Fischer G."/>
            <person name="Durrens P."/>
            <person name="Casaregola S."/>
            <person name="Lafontaine I."/>
            <person name="de Montigny J."/>
            <person name="Marck C."/>
            <person name="Neuveglise C."/>
            <person name="Talla E."/>
            <person name="Goffard N."/>
            <person name="Frangeul L."/>
            <person name="Aigle M."/>
            <person name="Anthouard V."/>
            <person name="Babour A."/>
            <person name="Barbe V."/>
            <person name="Barnay S."/>
            <person name="Blanchin S."/>
            <person name="Beckerich J.-M."/>
            <person name="Beyne E."/>
            <person name="Bleykasten C."/>
            <person name="Boisrame A."/>
            <person name="Boyer J."/>
            <person name="Cattolico L."/>
            <person name="Confanioleri F."/>
            <person name="de Daruvar A."/>
            <person name="Despons L."/>
            <person name="Fabre E."/>
            <person name="Fairhead C."/>
            <person name="Ferry-Dumazet H."/>
            <person name="Groppi A."/>
            <person name="Hantraye F."/>
            <person name="Hennequin C."/>
            <person name="Jauniaux N."/>
            <person name="Joyet P."/>
            <person name="Kachouri R."/>
            <person name="Kerrest A."/>
            <person name="Koszul R."/>
            <person name="Lemaire M."/>
            <person name="Lesur I."/>
            <person name="Ma L."/>
            <person name="Muller H."/>
            <person name="Nicaud J.-M."/>
            <person name="Nikolski M."/>
            <person name="Oztas S."/>
            <person name="Ozier-Kalogeropoulos O."/>
            <person name="Pellenz S."/>
            <person name="Potier S."/>
            <person name="Richard G.-F."/>
            <person name="Straub M.-L."/>
            <person name="Suleau A."/>
            <person name="Swennen D."/>
            <person name="Tekaia F."/>
            <person name="Wesolowski-Louvel M."/>
            <person name="Westhof E."/>
            <person name="Wirth B."/>
            <person name="Zeniou-Meyer M."/>
            <person name="Zivanovic Y."/>
            <person name="Bolotin-Fukuhara M."/>
            <person name="Thierry A."/>
            <person name="Bouchier C."/>
            <person name="Caudron B."/>
            <person name="Scarpelli C."/>
            <person name="Gaillardin C."/>
            <person name="Weissenbach J."/>
            <person name="Wincker P."/>
            <person name="Souciet J.-L."/>
        </authorList>
    </citation>
    <scope>NUCLEOTIDE SEQUENCE [LARGE SCALE GENOMIC DNA]</scope>
    <source>
        <strain>ATCC 8585 / CBS 2359 / DSM 70799 / NBRC 1267 / NRRL Y-1140 / WM37</strain>
    </source>
</reference>
<feature type="chain" id="PRO_0000409039" description="Oleate activated transcription factor 3">
    <location>
        <begin position="1"/>
        <end position="657"/>
    </location>
</feature>
<feature type="DNA-binding region" description="Zn(2)-C6 fungal-type" evidence="2">
    <location>
        <begin position="21"/>
        <end position="48"/>
    </location>
</feature>
<comment type="function">
    <text evidence="1">Transcriptional inhibitor with a significantly increased number of target genes in response to oleate.</text>
</comment>
<comment type="subcellular location">
    <subcellularLocation>
        <location evidence="1">Cytoplasm</location>
    </subcellularLocation>
    <subcellularLocation>
        <location evidence="2">Nucleus</location>
    </subcellularLocation>
    <subcellularLocation>
        <location evidence="1">Mitochondrion</location>
    </subcellularLocation>
</comment>
<comment type="similarity">
    <text evidence="3">Belongs to the OAF3 family.</text>
</comment>
<dbReference type="EMBL" id="CR382121">
    <property type="protein sequence ID" value="CAH02857.1"/>
    <property type="molecule type" value="Genomic_DNA"/>
</dbReference>
<dbReference type="RefSeq" id="XP_451269.1">
    <property type="nucleotide sequence ID" value="XM_451269.1"/>
</dbReference>
<dbReference type="SMR" id="Q6CXS0"/>
<dbReference type="FunCoup" id="Q6CXS0">
    <property type="interactions" value="207"/>
</dbReference>
<dbReference type="STRING" id="284590.Q6CXS0"/>
<dbReference type="PaxDb" id="284590-Q6CXS0"/>
<dbReference type="KEGG" id="kla:KLLA0_A06039g"/>
<dbReference type="eggNOG" id="ENOG502QQCV">
    <property type="taxonomic scope" value="Eukaryota"/>
</dbReference>
<dbReference type="HOGENOM" id="CLU_018684_0_0_1"/>
<dbReference type="InParanoid" id="Q6CXS0"/>
<dbReference type="Proteomes" id="UP000000598">
    <property type="component" value="Chromosome A"/>
</dbReference>
<dbReference type="GO" id="GO:0005739">
    <property type="term" value="C:mitochondrion"/>
    <property type="evidence" value="ECO:0007669"/>
    <property type="project" value="UniProtKB-SubCell"/>
</dbReference>
<dbReference type="GO" id="GO:0005634">
    <property type="term" value="C:nucleus"/>
    <property type="evidence" value="ECO:0007669"/>
    <property type="project" value="UniProtKB-SubCell"/>
</dbReference>
<dbReference type="GO" id="GO:0000981">
    <property type="term" value="F:DNA-binding transcription factor activity, RNA polymerase II-specific"/>
    <property type="evidence" value="ECO:0007669"/>
    <property type="project" value="InterPro"/>
</dbReference>
<dbReference type="GO" id="GO:0000978">
    <property type="term" value="F:RNA polymerase II cis-regulatory region sequence-specific DNA binding"/>
    <property type="evidence" value="ECO:0007669"/>
    <property type="project" value="TreeGrafter"/>
</dbReference>
<dbReference type="GO" id="GO:0008270">
    <property type="term" value="F:zinc ion binding"/>
    <property type="evidence" value="ECO:0007669"/>
    <property type="project" value="InterPro"/>
</dbReference>
<dbReference type="GO" id="GO:0045944">
    <property type="term" value="P:positive regulation of transcription by RNA polymerase II"/>
    <property type="evidence" value="ECO:0007669"/>
    <property type="project" value="TreeGrafter"/>
</dbReference>
<dbReference type="CDD" id="cd12148">
    <property type="entry name" value="fungal_TF_MHR"/>
    <property type="match status" value="1"/>
</dbReference>
<dbReference type="CDD" id="cd00067">
    <property type="entry name" value="GAL4"/>
    <property type="match status" value="1"/>
</dbReference>
<dbReference type="Gene3D" id="4.10.240.10">
    <property type="entry name" value="Zn(2)-C6 fungal-type DNA-binding domain"/>
    <property type="match status" value="1"/>
</dbReference>
<dbReference type="InterPro" id="IPR050675">
    <property type="entry name" value="OAF3"/>
</dbReference>
<dbReference type="InterPro" id="IPR036864">
    <property type="entry name" value="Zn2-C6_fun-type_DNA-bd_sf"/>
</dbReference>
<dbReference type="InterPro" id="IPR001138">
    <property type="entry name" value="Zn2Cys6_DnaBD"/>
</dbReference>
<dbReference type="PANTHER" id="PTHR31069:SF33">
    <property type="entry name" value="OLEATE ACTIVATED TRANSCRIPTION FACTOR 3"/>
    <property type="match status" value="1"/>
</dbReference>
<dbReference type="PANTHER" id="PTHR31069">
    <property type="entry name" value="OLEATE-ACTIVATED TRANSCRIPTION FACTOR 1-RELATED"/>
    <property type="match status" value="1"/>
</dbReference>
<dbReference type="Pfam" id="PF00172">
    <property type="entry name" value="Zn_clus"/>
    <property type="match status" value="1"/>
</dbReference>
<dbReference type="SMART" id="SM00066">
    <property type="entry name" value="GAL4"/>
    <property type="match status" value="1"/>
</dbReference>
<dbReference type="SUPFAM" id="SSF57701">
    <property type="entry name" value="Zn2/Cys6 DNA-binding domain"/>
    <property type="match status" value="1"/>
</dbReference>
<dbReference type="PROSITE" id="PS00463">
    <property type="entry name" value="ZN2_CY6_FUNGAL_1"/>
    <property type="match status" value="1"/>
</dbReference>
<dbReference type="PROSITE" id="PS50048">
    <property type="entry name" value="ZN2_CY6_FUNGAL_2"/>
    <property type="match status" value="1"/>
</dbReference>
<protein>
    <recommendedName>
        <fullName>Oleate activated transcription factor 3</fullName>
    </recommendedName>
</protein>
<evidence type="ECO:0000250" key="1"/>
<evidence type="ECO:0000255" key="2">
    <source>
        <dbReference type="PROSITE-ProRule" id="PRU00227"/>
    </source>
</evidence>
<evidence type="ECO:0000305" key="3"/>
<organism>
    <name type="scientific">Kluyveromyces lactis (strain ATCC 8585 / CBS 2359 / DSM 70799 / NBRC 1267 / NRRL Y-1140 / WM37)</name>
    <name type="common">Yeast</name>
    <name type="synonym">Candida sphaerica</name>
    <dbReference type="NCBI Taxonomy" id="284590"/>
    <lineage>
        <taxon>Eukaryota</taxon>
        <taxon>Fungi</taxon>
        <taxon>Dikarya</taxon>
        <taxon>Ascomycota</taxon>
        <taxon>Saccharomycotina</taxon>
        <taxon>Saccharomycetes</taxon>
        <taxon>Saccharomycetales</taxon>
        <taxon>Saccharomycetaceae</taxon>
        <taxon>Kluyveromyces</taxon>
    </lineage>
</organism>
<proteinExistence type="inferred from homology"/>
<keyword id="KW-0963">Cytoplasm</keyword>
<keyword id="KW-0238">DNA-binding</keyword>
<keyword id="KW-0479">Metal-binding</keyword>
<keyword id="KW-0496">Mitochondrion</keyword>
<keyword id="KW-0539">Nucleus</keyword>
<keyword id="KW-1185">Reference proteome</keyword>
<keyword id="KW-0678">Repressor</keyword>
<keyword id="KW-0804">Transcription</keyword>
<keyword id="KW-0805">Transcription regulation</keyword>
<keyword id="KW-0862">Zinc</keyword>
<name>OAF3_KLULA</name>